<name>Y4468_BACC1</name>
<feature type="chain" id="PRO_0000304813" description="UPF0473 protein BCE_4468">
    <location>
        <begin position="1"/>
        <end position="92"/>
    </location>
</feature>
<sequence>MEENQITIVDEKGNEHLCEIIFTFDAEKFGKKSYVVFSPIGEVDEDGDQIYDAMAYEQNEEEGGTLLPIESEEEWEMVQEMFNTLADEQEAE</sequence>
<organism>
    <name type="scientific">Bacillus cereus (strain ATCC 10987 / NRS 248)</name>
    <dbReference type="NCBI Taxonomy" id="222523"/>
    <lineage>
        <taxon>Bacteria</taxon>
        <taxon>Bacillati</taxon>
        <taxon>Bacillota</taxon>
        <taxon>Bacilli</taxon>
        <taxon>Bacillales</taxon>
        <taxon>Bacillaceae</taxon>
        <taxon>Bacillus</taxon>
        <taxon>Bacillus cereus group</taxon>
    </lineage>
</organism>
<protein>
    <recommendedName>
        <fullName evidence="1">UPF0473 protein BCE_4468</fullName>
    </recommendedName>
</protein>
<comment type="similarity">
    <text evidence="1">Belongs to the UPF0473 family.</text>
</comment>
<evidence type="ECO:0000255" key="1">
    <source>
        <dbReference type="HAMAP-Rule" id="MF_01448"/>
    </source>
</evidence>
<accession>Q730E8</accession>
<dbReference type="EMBL" id="AE017194">
    <property type="protein sequence ID" value="AAS43369.1"/>
    <property type="molecule type" value="Genomic_DNA"/>
</dbReference>
<dbReference type="KEGG" id="bca:BCE_4468"/>
<dbReference type="HOGENOM" id="CLU_146610_2_1_9"/>
<dbReference type="Proteomes" id="UP000002527">
    <property type="component" value="Chromosome"/>
</dbReference>
<dbReference type="HAMAP" id="MF_01448">
    <property type="entry name" value="UPF0473"/>
    <property type="match status" value="1"/>
</dbReference>
<dbReference type="InterPro" id="IPR009711">
    <property type="entry name" value="UPF0473"/>
</dbReference>
<dbReference type="NCBIfam" id="NF010216">
    <property type="entry name" value="PRK13678.1-3"/>
    <property type="match status" value="1"/>
</dbReference>
<dbReference type="PANTHER" id="PTHR40066">
    <property type="entry name" value="UPF0473 PROTEIN CBO2561/CLC_2432"/>
    <property type="match status" value="1"/>
</dbReference>
<dbReference type="PANTHER" id="PTHR40066:SF1">
    <property type="entry name" value="UPF0473 PROTEIN CBO2561_CLC_2432"/>
    <property type="match status" value="1"/>
</dbReference>
<dbReference type="Pfam" id="PF06949">
    <property type="entry name" value="DUF1292"/>
    <property type="match status" value="1"/>
</dbReference>
<proteinExistence type="inferred from homology"/>
<gene>
    <name type="ordered locus">BCE_4468</name>
</gene>
<reference key="1">
    <citation type="journal article" date="2004" name="Nucleic Acids Res.">
        <title>The genome sequence of Bacillus cereus ATCC 10987 reveals metabolic adaptations and a large plasmid related to Bacillus anthracis pXO1.</title>
        <authorList>
            <person name="Rasko D.A."/>
            <person name="Ravel J."/>
            <person name="Oekstad O.A."/>
            <person name="Helgason E."/>
            <person name="Cer R.Z."/>
            <person name="Jiang L."/>
            <person name="Shores K.A."/>
            <person name="Fouts D.E."/>
            <person name="Tourasse N.J."/>
            <person name="Angiuoli S.V."/>
            <person name="Kolonay J.F."/>
            <person name="Nelson W.C."/>
            <person name="Kolstoe A.-B."/>
            <person name="Fraser C.M."/>
            <person name="Read T.D."/>
        </authorList>
    </citation>
    <scope>NUCLEOTIDE SEQUENCE [LARGE SCALE GENOMIC DNA]</scope>
    <source>
        <strain>ATCC 10987 / NRS 248</strain>
    </source>
</reference>